<sequence>MISKINGKLFADMIIQGAQNLSNNADLVDSLNVYPVPDGDTGTNMNLTITSGREEVENNLSQNIGELGKTFSKGLLMGARGNSGVILSQLFRGFCKNIEEEKEISVQQFAESFQAGVETAYKAVMKPVEGTILTVAKDAAKAAMDYVDQAEDCVDLMAHLIEAASESLDNTPNLLAVLKEVGVVDSGGKGLLCVYEGFLKGLKGEKIEAQAPKLDTESFVNDDHDFHGVINTEDIVYGYCTEMMVRFGKNKKAFDEQEFRNDMSEFGDSLLVINDDEIVKVHVHTEHPGDVFNYGQKYGELIKLKVENMREQHREVIRKEQDGLQNKEANESKTVETAIVTISVGDGIAELFKSMGATHIISGGQTMNPSTEDIVKVIEQSQCKRAIILPNNKNIMMASEQAASIVEAETVVIPTKSIPQGISALFQYDLESSLEDNKRHMSDALETVQSGSITFAVRDTKIDGIEIKKDEFMGLAEDKIVTSDVNQFHAVKGLLSKLLNEDSEILTMISGEDADNSITNQIINWIESEYPDVEVEQHEGGQPIYQYFFAVE</sequence>
<reference key="1">
    <citation type="journal article" date="2003" name="Mol. Microbiol.">
        <title>Genome-based analysis of virulence genes in a non-biofilm-forming Staphylococcus epidermidis strain (ATCC 12228).</title>
        <authorList>
            <person name="Zhang Y.-Q."/>
            <person name="Ren S.-X."/>
            <person name="Li H.-L."/>
            <person name="Wang Y.-X."/>
            <person name="Fu G."/>
            <person name="Yang J."/>
            <person name="Qin Z.-Q."/>
            <person name="Miao Y.-G."/>
            <person name="Wang W.-Y."/>
            <person name="Chen R.-S."/>
            <person name="Shen Y."/>
            <person name="Chen Z."/>
            <person name="Yuan Z.-H."/>
            <person name="Zhao G.-P."/>
            <person name="Qu D."/>
            <person name="Danchin A."/>
            <person name="Wen Y.-M."/>
        </authorList>
    </citation>
    <scope>NUCLEOTIDE SEQUENCE [LARGE SCALE GENOMIC DNA]</scope>
    <source>
        <strain>ATCC 12228 / FDA PCI 1200</strain>
    </source>
</reference>
<evidence type="ECO:0000255" key="1">
    <source>
        <dbReference type="PROSITE-ProRule" id="PRU00813"/>
    </source>
</evidence>
<proteinExistence type="predicted"/>
<gene>
    <name type="ordered locus">SE_0901</name>
</gene>
<feature type="chain" id="PRO_0000304164" description="Uncharacterized protein SE_0901">
    <location>
        <begin position="1"/>
        <end position="552"/>
    </location>
</feature>
<feature type="domain" description="DhaL" evidence="1">
    <location>
        <begin position="8"/>
        <end position="200"/>
    </location>
</feature>
<accession>Q8CSV4</accession>
<name>Y901_STAES</name>
<organism>
    <name type="scientific">Staphylococcus epidermidis (strain ATCC 12228 / FDA PCI 1200)</name>
    <dbReference type="NCBI Taxonomy" id="176280"/>
    <lineage>
        <taxon>Bacteria</taxon>
        <taxon>Bacillati</taxon>
        <taxon>Bacillota</taxon>
        <taxon>Bacilli</taxon>
        <taxon>Bacillales</taxon>
        <taxon>Staphylococcaceae</taxon>
        <taxon>Staphylococcus</taxon>
    </lineage>
</organism>
<protein>
    <recommendedName>
        <fullName>Uncharacterized protein SE_0901</fullName>
    </recommendedName>
</protein>
<dbReference type="EMBL" id="AE015929">
    <property type="protein sequence ID" value="AAO04498.1"/>
    <property type="molecule type" value="Genomic_DNA"/>
</dbReference>
<dbReference type="RefSeq" id="NP_764456.1">
    <property type="nucleotide sequence ID" value="NC_004461.1"/>
</dbReference>
<dbReference type="SMR" id="Q8CSV4"/>
<dbReference type="KEGG" id="sep:SE_0901"/>
<dbReference type="PATRIC" id="fig|176280.10.peg.874"/>
<dbReference type="eggNOG" id="COG1461">
    <property type="taxonomic scope" value="Bacteria"/>
</dbReference>
<dbReference type="HOGENOM" id="CLU_017496_1_0_9"/>
<dbReference type="OrthoDB" id="9760324at2"/>
<dbReference type="Proteomes" id="UP000001411">
    <property type="component" value="Chromosome"/>
</dbReference>
<dbReference type="GO" id="GO:0004371">
    <property type="term" value="F:glycerone kinase activity"/>
    <property type="evidence" value="ECO:0007669"/>
    <property type="project" value="InterPro"/>
</dbReference>
<dbReference type="GO" id="GO:0006071">
    <property type="term" value="P:glycerol metabolic process"/>
    <property type="evidence" value="ECO:0007669"/>
    <property type="project" value="InterPro"/>
</dbReference>
<dbReference type="Gene3D" id="1.25.40.340">
    <property type="match status" value="1"/>
</dbReference>
<dbReference type="InterPro" id="IPR050270">
    <property type="entry name" value="DegV_domain_contain"/>
</dbReference>
<dbReference type="InterPro" id="IPR004007">
    <property type="entry name" value="DhaL_dom"/>
</dbReference>
<dbReference type="InterPro" id="IPR036117">
    <property type="entry name" value="DhaL_dom_sf"/>
</dbReference>
<dbReference type="InterPro" id="IPR033470">
    <property type="entry name" value="FakA-like_C"/>
</dbReference>
<dbReference type="InterPro" id="IPR048394">
    <property type="entry name" value="FakA-like_M"/>
</dbReference>
<dbReference type="InterPro" id="IPR019986">
    <property type="entry name" value="YloV-like"/>
</dbReference>
<dbReference type="NCBIfam" id="NF038248">
    <property type="entry name" value="FakA_VfrB"/>
    <property type="match status" value="1"/>
</dbReference>
<dbReference type="NCBIfam" id="TIGR03599">
    <property type="entry name" value="YloV"/>
    <property type="match status" value="1"/>
</dbReference>
<dbReference type="PANTHER" id="PTHR33434">
    <property type="entry name" value="DEGV DOMAIN-CONTAINING PROTEIN DR_1986-RELATED"/>
    <property type="match status" value="1"/>
</dbReference>
<dbReference type="PANTHER" id="PTHR33434:SF4">
    <property type="entry name" value="PHOSPHATASE PROTEIN"/>
    <property type="match status" value="1"/>
</dbReference>
<dbReference type="Pfam" id="PF02734">
    <property type="entry name" value="Dak2"/>
    <property type="match status" value="1"/>
</dbReference>
<dbReference type="Pfam" id="PF13684">
    <property type="entry name" value="FakA-like_C"/>
    <property type="match status" value="1"/>
</dbReference>
<dbReference type="Pfam" id="PF21645">
    <property type="entry name" value="FakA-like_M"/>
    <property type="match status" value="1"/>
</dbReference>
<dbReference type="SMART" id="SM01121">
    <property type="entry name" value="Dak1_2"/>
    <property type="match status" value="1"/>
</dbReference>
<dbReference type="SMART" id="SM01120">
    <property type="entry name" value="Dak2"/>
    <property type="match status" value="1"/>
</dbReference>
<dbReference type="SUPFAM" id="SSF101473">
    <property type="entry name" value="DhaL-like"/>
    <property type="match status" value="1"/>
</dbReference>
<dbReference type="PROSITE" id="PS51480">
    <property type="entry name" value="DHAL"/>
    <property type="match status" value="1"/>
</dbReference>